<name>KEX1_ASPCL</name>
<reference key="1">
    <citation type="journal article" date="2008" name="PLoS Genet.">
        <title>Genomic islands in the pathogenic filamentous fungus Aspergillus fumigatus.</title>
        <authorList>
            <person name="Fedorova N.D."/>
            <person name="Khaldi N."/>
            <person name="Joardar V.S."/>
            <person name="Maiti R."/>
            <person name="Amedeo P."/>
            <person name="Anderson M.J."/>
            <person name="Crabtree J."/>
            <person name="Silva J.C."/>
            <person name="Badger J.H."/>
            <person name="Albarraq A."/>
            <person name="Angiuoli S."/>
            <person name="Bussey H."/>
            <person name="Bowyer P."/>
            <person name="Cotty P.J."/>
            <person name="Dyer P.S."/>
            <person name="Egan A."/>
            <person name="Galens K."/>
            <person name="Fraser-Liggett C.M."/>
            <person name="Haas B.J."/>
            <person name="Inman J.M."/>
            <person name="Kent R."/>
            <person name="Lemieux S."/>
            <person name="Malavazi I."/>
            <person name="Orvis J."/>
            <person name="Roemer T."/>
            <person name="Ronning C.M."/>
            <person name="Sundaram J.P."/>
            <person name="Sutton G."/>
            <person name="Turner G."/>
            <person name="Venter J.C."/>
            <person name="White O.R."/>
            <person name="Whitty B.R."/>
            <person name="Youngman P."/>
            <person name="Wolfe K.H."/>
            <person name="Goldman G.H."/>
            <person name="Wortman J.R."/>
            <person name="Jiang B."/>
            <person name="Denning D.W."/>
            <person name="Nierman W.C."/>
        </authorList>
    </citation>
    <scope>NUCLEOTIDE SEQUENCE [LARGE SCALE GENOMIC DNA]</scope>
    <source>
        <strain>ATCC 1007 / CBS 513.65 / DSM 816 / NCTC 3887 / NRRL 1 / QM 1276 / 107</strain>
    </source>
</reference>
<keyword id="KW-0053">Apoptosis</keyword>
<keyword id="KW-0121">Carboxypeptidase</keyword>
<keyword id="KW-0325">Glycoprotein</keyword>
<keyword id="KW-0333">Golgi apparatus</keyword>
<keyword id="KW-0378">Hydrolase</keyword>
<keyword id="KW-0472">Membrane</keyword>
<keyword id="KW-0645">Protease</keyword>
<keyword id="KW-1185">Reference proteome</keyword>
<keyword id="KW-0732">Signal</keyword>
<keyword id="KW-0812">Transmembrane</keyword>
<keyword id="KW-1133">Transmembrane helix</keyword>
<comment type="function">
    <text evidence="1">Protease with a carboxypeptidase B-like function involved in the C-terminal processing of the lysine and arginine residues from protein precursors. Promotes cell fusion and is involved in the programmed cell death (By similarity).</text>
</comment>
<comment type="catalytic activity">
    <reaction>
        <text>Preferential release of a C-terminal arginine or lysine residue.</text>
        <dbReference type="EC" id="3.4.16.6"/>
    </reaction>
</comment>
<comment type="subcellular location">
    <subcellularLocation>
        <location evidence="1">Golgi apparatus</location>
        <location evidence="1">trans-Golgi network membrane</location>
        <topology evidence="1">Single-pass type I membrane protein</topology>
    </subcellularLocation>
</comment>
<comment type="similarity">
    <text evidence="5">Belongs to the peptidase S10 family.</text>
</comment>
<sequence length="613" mass="68819">MTMSFCALLFFLIISPTLAATKSAADYYVRSLPGAPEGPLLKMHAGHIEVDAPNNGNLFFWHYQNRHIANRQRTVIWLNGGPGCSSMDGALMEIGPYRLKDNHTLEYNNGSWDEFANLLFVDQPVGTGFSYVNTNSYLHELDEMAAQFIIFLEKWFQLFPEYERDDIYIAGESYAGQHIPYIAKAIQERNKKVDDKNSARWNLRGLVIGNGWISPAQQYPSYLNFAYTEGLVKEGSSLAKDLDVYQSVCESKISAAPNAVNIKDCESVLQQILSRTMDSERKCYNMYDVRLRDVYPSCGMNWPSDLVSVKPYLQSRDVVRALNINPDKKSGWEECSGAVGSTFTAANSVPSVQLLPELLESGVRILLFSGDKDLICNHIGTEQLINNMKWNGGIGFETSPGVWAPRRHWTFEGEPAGIYQYARNLTYVLFYNASHMVPYDLPRQSRDMLDRFMRVDIANIGGQPADSRIDGEKLPQTSVGGHPNSTAAEQQAKEKIKETEWKAYAKSGEAALIVVIIGVTVWGFFIWRSRRRNRGYEGVYQKELGSGSILERFQNKRSGAGDVEAGDFDESELDTLHSPGLERENYAVGDDSDEDDPNHPRPTASSREDGTHP</sequence>
<feature type="signal peptide" evidence="2">
    <location>
        <begin position="1"/>
        <end position="19"/>
    </location>
</feature>
<feature type="chain" id="PRO_0000411902" description="Pheromone-processing carboxypeptidase kex1">
    <location>
        <begin position="20"/>
        <end position="613"/>
    </location>
</feature>
<feature type="topological domain" description="Lumenal" evidence="2">
    <location>
        <begin position="20"/>
        <end position="506"/>
    </location>
</feature>
<feature type="transmembrane region" description="Helical" evidence="2">
    <location>
        <begin position="507"/>
        <end position="527"/>
    </location>
</feature>
<feature type="topological domain" description="Cytoplasmic" evidence="2">
    <location>
        <begin position="528"/>
        <end position="613"/>
    </location>
</feature>
<feature type="region of interest" description="Disordered" evidence="4">
    <location>
        <begin position="463"/>
        <end position="490"/>
    </location>
</feature>
<feature type="region of interest" description="Disordered" evidence="4">
    <location>
        <begin position="559"/>
        <end position="613"/>
    </location>
</feature>
<feature type="compositionally biased region" description="Polar residues" evidence="4">
    <location>
        <begin position="475"/>
        <end position="489"/>
    </location>
</feature>
<feature type="compositionally biased region" description="Acidic residues" evidence="4">
    <location>
        <begin position="564"/>
        <end position="573"/>
    </location>
</feature>
<feature type="active site" evidence="3">
    <location>
        <position position="173"/>
    </location>
</feature>
<feature type="active site" evidence="3">
    <location>
        <position position="373"/>
    </location>
</feature>
<feature type="active site" evidence="3">
    <location>
        <position position="435"/>
    </location>
</feature>
<feature type="glycosylation site" description="N-linked (GlcNAc...) asparagine" evidence="2">
    <location>
        <position position="102"/>
    </location>
</feature>
<feature type="glycosylation site" description="N-linked (GlcNAc...) asparagine" evidence="2">
    <location>
        <position position="109"/>
    </location>
</feature>
<feature type="glycosylation site" description="N-linked (GlcNAc...) asparagine" evidence="2">
    <location>
        <position position="424"/>
    </location>
</feature>
<feature type="glycosylation site" description="N-linked (GlcNAc...) asparagine" evidence="2">
    <location>
        <position position="432"/>
    </location>
</feature>
<feature type="glycosylation site" description="N-linked (GlcNAc...) asparagine" evidence="2">
    <location>
        <position position="484"/>
    </location>
</feature>
<evidence type="ECO:0000250" key="1"/>
<evidence type="ECO:0000255" key="2"/>
<evidence type="ECO:0000255" key="3">
    <source>
        <dbReference type="PROSITE-ProRule" id="PRU10074"/>
    </source>
</evidence>
<evidence type="ECO:0000256" key="4">
    <source>
        <dbReference type="SAM" id="MobiDB-lite"/>
    </source>
</evidence>
<evidence type="ECO:0000305" key="5"/>
<dbReference type="EC" id="3.4.16.6"/>
<dbReference type="EMBL" id="DS027059">
    <property type="protein sequence ID" value="EAW07936.1"/>
    <property type="molecule type" value="Genomic_DNA"/>
</dbReference>
<dbReference type="RefSeq" id="XP_001269362.1">
    <property type="nucleotide sequence ID" value="XM_001269361.1"/>
</dbReference>
<dbReference type="SMR" id="A1CQL5"/>
<dbReference type="STRING" id="344612.A1CQL5"/>
<dbReference type="ESTHER" id="aspcl-kex1">
    <property type="family name" value="Carboxypeptidase_S10"/>
</dbReference>
<dbReference type="MEROPS" id="S10.007"/>
<dbReference type="GlyCosmos" id="A1CQL5">
    <property type="glycosylation" value="5 sites, No reported glycans"/>
</dbReference>
<dbReference type="EnsemblFungi" id="EAW07936">
    <property type="protein sequence ID" value="EAW07936"/>
    <property type="gene ID" value="ACLA_026530"/>
</dbReference>
<dbReference type="GeneID" id="4700961"/>
<dbReference type="KEGG" id="act:ACLA_026530"/>
<dbReference type="VEuPathDB" id="FungiDB:ACLA_026530"/>
<dbReference type="eggNOG" id="KOG1282">
    <property type="taxonomic scope" value="Eukaryota"/>
</dbReference>
<dbReference type="HOGENOM" id="CLU_008523_11_0_1"/>
<dbReference type="OMA" id="EMADQFV"/>
<dbReference type="OrthoDB" id="443318at2759"/>
<dbReference type="Proteomes" id="UP000006701">
    <property type="component" value="Unassembled WGS sequence"/>
</dbReference>
<dbReference type="GO" id="GO:0016020">
    <property type="term" value="C:membrane"/>
    <property type="evidence" value="ECO:0007669"/>
    <property type="project" value="UniProtKB-KW"/>
</dbReference>
<dbReference type="GO" id="GO:0005802">
    <property type="term" value="C:trans-Golgi network"/>
    <property type="evidence" value="ECO:0007669"/>
    <property type="project" value="TreeGrafter"/>
</dbReference>
<dbReference type="GO" id="GO:0004185">
    <property type="term" value="F:serine-type carboxypeptidase activity"/>
    <property type="evidence" value="ECO:0007669"/>
    <property type="project" value="UniProtKB-EC"/>
</dbReference>
<dbReference type="GO" id="GO:0006915">
    <property type="term" value="P:apoptotic process"/>
    <property type="evidence" value="ECO:0007669"/>
    <property type="project" value="UniProtKB-KW"/>
</dbReference>
<dbReference type="GO" id="GO:0006508">
    <property type="term" value="P:proteolysis"/>
    <property type="evidence" value="ECO:0007669"/>
    <property type="project" value="UniProtKB-KW"/>
</dbReference>
<dbReference type="FunFam" id="3.40.50.1820:FF:000121">
    <property type="entry name" value="Carboxypeptidase D"/>
    <property type="match status" value="1"/>
</dbReference>
<dbReference type="Gene3D" id="3.40.50.1820">
    <property type="entry name" value="alpha/beta hydrolase"/>
    <property type="match status" value="1"/>
</dbReference>
<dbReference type="InterPro" id="IPR029058">
    <property type="entry name" value="AB_hydrolase_fold"/>
</dbReference>
<dbReference type="InterPro" id="IPR001563">
    <property type="entry name" value="Peptidase_S10"/>
</dbReference>
<dbReference type="InterPro" id="IPR018202">
    <property type="entry name" value="Ser_caboxypep_ser_AS"/>
</dbReference>
<dbReference type="PANTHER" id="PTHR11802:SF190">
    <property type="entry name" value="PHEROMONE-PROCESSING CARBOXYPEPTIDASE KEX1"/>
    <property type="match status" value="1"/>
</dbReference>
<dbReference type="PANTHER" id="PTHR11802">
    <property type="entry name" value="SERINE PROTEASE FAMILY S10 SERINE CARBOXYPEPTIDASE"/>
    <property type="match status" value="1"/>
</dbReference>
<dbReference type="Pfam" id="PF00450">
    <property type="entry name" value="Peptidase_S10"/>
    <property type="match status" value="1"/>
</dbReference>
<dbReference type="PRINTS" id="PR00724">
    <property type="entry name" value="CRBOXYPTASEC"/>
</dbReference>
<dbReference type="SUPFAM" id="SSF53474">
    <property type="entry name" value="alpha/beta-Hydrolases"/>
    <property type="match status" value="1"/>
</dbReference>
<dbReference type="PROSITE" id="PS00131">
    <property type="entry name" value="CARBOXYPEPT_SER_SER"/>
    <property type="match status" value="1"/>
</dbReference>
<proteinExistence type="inferred from homology"/>
<accession>A1CQL5</accession>
<gene>
    <name type="primary">kex1</name>
    <name type="ORF">ACLA_026530</name>
</gene>
<organism>
    <name type="scientific">Aspergillus clavatus (strain ATCC 1007 / CBS 513.65 / DSM 816 / NCTC 3887 / NRRL 1 / QM 1276 / 107)</name>
    <dbReference type="NCBI Taxonomy" id="344612"/>
    <lineage>
        <taxon>Eukaryota</taxon>
        <taxon>Fungi</taxon>
        <taxon>Dikarya</taxon>
        <taxon>Ascomycota</taxon>
        <taxon>Pezizomycotina</taxon>
        <taxon>Eurotiomycetes</taxon>
        <taxon>Eurotiomycetidae</taxon>
        <taxon>Eurotiales</taxon>
        <taxon>Aspergillaceae</taxon>
        <taxon>Aspergillus</taxon>
        <taxon>Aspergillus subgen. Fumigati</taxon>
    </lineage>
</organism>
<protein>
    <recommendedName>
        <fullName>Pheromone-processing carboxypeptidase kex1</fullName>
        <ecNumber>3.4.16.6</ecNumber>
    </recommendedName>
    <alternativeName>
        <fullName>Carboxypeptidase D</fullName>
    </alternativeName>
</protein>